<name>Y545_CHLMU</name>
<evidence type="ECO:0000256" key="1">
    <source>
        <dbReference type="SAM" id="MobiDB-lite"/>
    </source>
</evidence>
<evidence type="ECO:0000305" key="2"/>
<comment type="similarity">
    <text evidence="2">Belongs to the chlamydial CPn_0422/CT_273/TC_0545 family.</text>
</comment>
<accession>Q9PKC1</accession>
<dbReference type="EMBL" id="AE002160">
    <property type="protein sequence ID" value="AAF39385.1"/>
    <property type="molecule type" value="Genomic_DNA"/>
</dbReference>
<dbReference type="PIR" id="F81689">
    <property type="entry name" value="F81689"/>
</dbReference>
<dbReference type="RefSeq" id="WP_010230803.1">
    <property type="nucleotide sequence ID" value="NZ_CP063055.1"/>
</dbReference>
<dbReference type="SMR" id="Q9PKC1"/>
<dbReference type="GeneID" id="1245905"/>
<dbReference type="KEGG" id="cmu:TC_0545"/>
<dbReference type="HOGENOM" id="CLU_126988_0_0_0"/>
<dbReference type="OrthoDB" id="17827at2"/>
<dbReference type="Proteomes" id="UP000000800">
    <property type="component" value="Chromosome"/>
</dbReference>
<dbReference type="InterPro" id="IPR035407">
    <property type="entry name" value="DUF5399"/>
</dbReference>
<dbReference type="Pfam" id="PF17377">
    <property type="entry name" value="DUF5399"/>
    <property type="match status" value="1"/>
</dbReference>
<gene>
    <name type="ordered locus">TC_0545</name>
</gene>
<reference key="1">
    <citation type="journal article" date="2000" name="Nucleic Acids Res.">
        <title>Genome sequences of Chlamydia trachomatis MoPn and Chlamydia pneumoniae AR39.</title>
        <authorList>
            <person name="Read T.D."/>
            <person name="Brunham R.C."/>
            <person name="Shen C."/>
            <person name="Gill S.R."/>
            <person name="Heidelberg J.F."/>
            <person name="White O."/>
            <person name="Hickey E.K."/>
            <person name="Peterson J.D."/>
            <person name="Utterback T.R."/>
            <person name="Berry K.J."/>
            <person name="Bass S."/>
            <person name="Linher K.D."/>
            <person name="Weidman J.F."/>
            <person name="Khouri H.M."/>
            <person name="Craven B."/>
            <person name="Bowman C."/>
            <person name="Dodson R.J."/>
            <person name="Gwinn M.L."/>
            <person name="Nelson W.C."/>
            <person name="DeBoy R.T."/>
            <person name="Kolonay J.F."/>
            <person name="McClarty G."/>
            <person name="Salzberg S.L."/>
            <person name="Eisen J.A."/>
            <person name="Fraser C.M."/>
        </authorList>
    </citation>
    <scope>NUCLEOTIDE SEQUENCE [LARGE SCALE GENOMIC DNA]</scope>
    <source>
        <strain>MoPn / Nigg</strain>
    </source>
</reference>
<sequence>MVEIFNYSTSVYEKHSSTNKLVSDFRKEIQMEGAAIRDIAKHAQILDMTPKPSALSTLMQTNKKTCWASFSPPANFHKQRFSTPYLVPSLGSPDKQDQDMEKISSYLKVLTRGKFSYRSETSPLLKKNKPSSDQDDTSKQSFDQDEEEDALVHEGKILLRALDQGIKSSNLLIDYVISRIFQFVQG</sequence>
<proteinExistence type="inferred from homology"/>
<organism>
    <name type="scientific">Chlamydia muridarum (strain MoPn / Nigg)</name>
    <dbReference type="NCBI Taxonomy" id="243161"/>
    <lineage>
        <taxon>Bacteria</taxon>
        <taxon>Pseudomonadati</taxon>
        <taxon>Chlamydiota</taxon>
        <taxon>Chlamydiia</taxon>
        <taxon>Chlamydiales</taxon>
        <taxon>Chlamydiaceae</taxon>
        <taxon>Chlamydia/Chlamydophila group</taxon>
        <taxon>Chlamydia</taxon>
    </lineage>
</organism>
<feature type="chain" id="PRO_0000218375" description="Uncharacterized protein TC_0545">
    <location>
        <begin position="1"/>
        <end position="186"/>
    </location>
</feature>
<feature type="region of interest" description="Disordered" evidence="1">
    <location>
        <begin position="121"/>
        <end position="146"/>
    </location>
</feature>
<protein>
    <recommendedName>
        <fullName>Uncharacterized protein TC_0545</fullName>
    </recommendedName>
</protein>